<dbReference type="EMBL" id="AE005674">
    <property type="protein sequence ID" value="AAN43035.1"/>
    <property type="status" value="ALT_INIT"/>
    <property type="molecule type" value="Genomic_DNA"/>
</dbReference>
<dbReference type="EMBL" id="AE014073">
    <property type="protein sequence ID" value="AAP16930.1"/>
    <property type="status" value="ALT_INIT"/>
    <property type="molecule type" value="Genomic_DNA"/>
</dbReference>
<dbReference type="RefSeq" id="NP_707328.1">
    <property type="nucleotide sequence ID" value="NC_004337.2"/>
</dbReference>
<dbReference type="SMR" id="Q83L69"/>
<dbReference type="PaxDb" id="198214-SF1436"/>
<dbReference type="GeneID" id="1026370"/>
<dbReference type="KEGG" id="sfl:SF1436"/>
<dbReference type="KEGG" id="sfx:S1551"/>
<dbReference type="PATRIC" id="fig|198214.7.peg.1692"/>
<dbReference type="HOGENOM" id="CLU_216793_1_0_6"/>
<dbReference type="Proteomes" id="UP000001006">
    <property type="component" value="Chromosome"/>
</dbReference>
<dbReference type="Proteomes" id="UP000002673">
    <property type="component" value="Chromosome"/>
</dbReference>
<dbReference type="GO" id="GO:0016020">
    <property type="term" value="C:membrane"/>
    <property type="evidence" value="ECO:0007669"/>
    <property type="project" value="UniProtKB-SubCell"/>
</dbReference>
<dbReference type="InterPro" id="IPR048191">
    <property type="entry name" value="YoaI-like"/>
</dbReference>
<dbReference type="NCBIfam" id="NF041475">
    <property type="entry name" value="membrane_YoaI"/>
    <property type="match status" value="1"/>
</dbReference>
<sequence>MNDQMFVETLIITSSFFAIAVVLVLSVLLIERIG</sequence>
<gene>
    <name type="primary">yoaI</name>
    <name type="ordered locus">SF1436</name>
    <name type="ordered locus">S1551</name>
</gene>
<feature type="chain" id="PRO_0000248932" description="Uncharacterized protein YoaI">
    <location>
        <begin position="1"/>
        <end position="34"/>
    </location>
</feature>
<feature type="transmembrane region" description="Helical" evidence="1">
    <location>
        <begin position="10"/>
        <end position="30"/>
    </location>
</feature>
<name>YOAI_SHIFL</name>
<protein>
    <recommendedName>
        <fullName>Uncharacterized protein YoaI</fullName>
    </recommendedName>
</protein>
<keyword id="KW-0472">Membrane</keyword>
<keyword id="KW-1185">Reference proteome</keyword>
<keyword id="KW-0812">Transmembrane</keyword>
<keyword id="KW-1133">Transmembrane helix</keyword>
<evidence type="ECO:0000255" key="1"/>
<evidence type="ECO:0000305" key="2"/>
<accession>Q83L69</accession>
<accession>Q7C1Q2</accession>
<organism>
    <name type="scientific">Shigella flexneri</name>
    <dbReference type="NCBI Taxonomy" id="623"/>
    <lineage>
        <taxon>Bacteria</taxon>
        <taxon>Pseudomonadati</taxon>
        <taxon>Pseudomonadota</taxon>
        <taxon>Gammaproteobacteria</taxon>
        <taxon>Enterobacterales</taxon>
        <taxon>Enterobacteriaceae</taxon>
        <taxon>Shigella</taxon>
    </lineage>
</organism>
<comment type="subcellular location">
    <subcellularLocation>
        <location evidence="2">Membrane</location>
        <topology evidence="2">Single-pass membrane protein</topology>
    </subcellularLocation>
</comment>
<comment type="sequence caution" evidence="2">
    <conflict type="erroneous initiation">
        <sequence resource="EMBL-CDS" id="AAN43035"/>
    </conflict>
</comment>
<comment type="sequence caution" evidence="2">
    <conflict type="erroneous initiation">
        <sequence resource="EMBL-CDS" id="AAP16930"/>
    </conflict>
</comment>
<proteinExistence type="predicted"/>
<reference key="1">
    <citation type="journal article" date="2002" name="Nucleic Acids Res.">
        <title>Genome sequence of Shigella flexneri 2a: insights into pathogenicity through comparison with genomes of Escherichia coli K12 and O157.</title>
        <authorList>
            <person name="Jin Q."/>
            <person name="Yuan Z."/>
            <person name="Xu J."/>
            <person name="Wang Y."/>
            <person name="Shen Y."/>
            <person name="Lu W."/>
            <person name="Wang J."/>
            <person name="Liu H."/>
            <person name="Yang J."/>
            <person name="Yang F."/>
            <person name="Zhang X."/>
            <person name="Zhang J."/>
            <person name="Yang G."/>
            <person name="Wu H."/>
            <person name="Qu D."/>
            <person name="Dong J."/>
            <person name="Sun L."/>
            <person name="Xue Y."/>
            <person name="Zhao A."/>
            <person name="Gao Y."/>
            <person name="Zhu J."/>
            <person name="Kan B."/>
            <person name="Ding K."/>
            <person name="Chen S."/>
            <person name="Cheng H."/>
            <person name="Yao Z."/>
            <person name="He B."/>
            <person name="Chen R."/>
            <person name="Ma D."/>
            <person name="Qiang B."/>
            <person name="Wen Y."/>
            <person name="Hou Y."/>
            <person name="Yu J."/>
        </authorList>
    </citation>
    <scope>NUCLEOTIDE SEQUENCE [LARGE SCALE GENOMIC DNA]</scope>
    <source>
        <strain>301 / Serotype 2a</strain>
    </source>
</reference>
<reference key="2">
    <citation type="journal article" date="2003" name="Infect. Immun.">
        <title>Complete genome sequence and comparative genomics of Shigella flexneri serotype 2a strain 2457T.</title>
        <authorList>
            <person name="Wei J."/>
            <person name="Goldberg M.B."/>
            <person name="Burland V."/>
            <person name="Venkatesan M.M."/>
            <person name="Deng W."/>
            <person name="Fournier G."/>
            <person name="Mayhew G.F."/>
            <person name="Plunkett G. III"/>
            <person name="Rose D.J."/>
            <person name="Darling A."/>
            <person name="Mau B."/>
            <person name="Perna N.T."/>
            <person name="Payne S.M."/>
            <person name="Runyen-Janecky L.J."/>
            <person name="Zhou S."/>
            <person name="Schwartz D.C."/>
            <person name="Blattner F.R."/>
        </authorList>
    </citation>
    <scope>NUCLEOTIDE SEQUENCE [LARGE SCALE GENOMIC DNA]</scope>
    <source>
        <strain>ATCC 700930 / 2457T / Serotype 2a</strain>
    </source>
</reference>